<evidence type="ECO:0000255" key="1">
    <source>
        <dbReference type="HAMAP-Rule" id="MF_01123"/>
    </source>
</evidence>
<proteinExistence type="inferred from homology"/>
<feature type="chain" id="PRO_1000085000" description="Acetyl-coenzyme A synthetase">
    <location>
        <begin position="1"/>
        <end position="651"/>
    </location>
</feature>
<feature type="binding site" evidence="1">
    <location>
        <begin position="189"/>
        <end position="192"/>
    </location>
    <ligand>
        <name>CoA</name>
        <dbReference type="ChEBI" id="CHEBI:57287"/>
    </ligand>
</feature>
<feature type="binding site" evidence="1">
    <location>
        <position position="311"/>
    </location>
    <ligand>
        <name>CoA</name>
        <dbReference type="ChEBI" id="CHEBI:57287"/>
    </ligand>
</feature>
<feature type="binding site" evidence="1">
    <location>
        <position position="335"/>
    </location>
    <ligand>
        <name>CoA</name>
        <dbReference type="ChEBI" id="CHEBI:57287"/>
    </ligand>
</feature>
<feature type="binding site" evidence="1">
    <location>
        <begin position="387"/>
        <end position="389"/>
    </location>
    <ligand>
        <name>ATP</name>
        <dbReference type="ChEBI" id="CHEBI:30616"/>
    </ligand>
</feature>
<feature type="binding site" evidence="1">
    <location>
        <begin position="411"/>
        <end position="416"/>
    </location>
    <ligand>
        <name>ATP</name>
        <dbReference type="ChEBI" id="CHEBI:30616"/>
    </ligand>
</feature>
<feature type="binding site" evidence="1">
    <location>
        <position position="500"/>
    </location>
    <ligand>
        <name>ATP</name>
        <dbReference type="ChEBI" id="CHEBI:30616"/>
    </ligand>
</feature>
<feature type="binding site" evidence="1">
    <location>
        <position position="515"/>
    </location>
    <ligand>
        <name>ATP</name>
        <dbReference type="ChEBI" id="CHEBI:30616"/>
    </ligand>
</feature>
<feature type="binding site" evidence="1">
    <location>
        <position position="523"/>
    </location>
    <ligand>
        <name>CoA</name>
        <dbReference type="ChEBI" id="CHEBI:57287"/>
    </ligand>
</feature>
<feature type="binding site" evidence="1">
    <location>
        <position position="526"/>
    </location>
    <ligand>
        <name>ATP</name>
        <dbReference type="ChEBI" id="CHEBI:30616"/>
    </ligand>
</feature>
<feature type="binding site" evidence="1">
    <location>
        <position position="537"/>
    </location>
    <ligand>
        <name>Mg(2+)</name>
        <dbReference type="ChEBI" id="CHEBI:18420"/>
    </ligand>
</feature>
<feature type="binding site" evidence="1">
    <location>
        <position position="539"/>
    </location>
    <ligand>
        <name>Mg(2+)</name>
        <dbReference type="ChEBI" id="CHEBI:18420"/>
    </ligand>
</feature>
<feature type="binding site" evidence="1">
    <location>
        <position position="542"/>
    </location>
    <ligand>
        <name>Mg(2+)</name>
        <dbReference type="ChEBI" id="CHEBI:18420"/>
    </ligand>
</feature>
<feature type="binding site">
    <location>
        <position position="586"/>
    </location>
    <ligand>
        <name>CoA</name>
        <dbReference type="ChEBI" id="CHEBI:57287"/>
    </ligand>
</feature>
<feature type="modified residue" description="N6-acetyllysine" evidence="1">
    <location>
        <position position="611"/>
    </location>
</feature>
<accession>A9WWT6</accession>
<name>ACSA_BRUSI</name>
<protein>
    <recommendedName>
        <fullName evidence="1">Acetyl-coenzyme A synthetase</fullName>
        <shortName evidence="1">AcCoA synthetase</shortName>
        <shortName evidence="1">Acs</shortName>
        <ecNumber evidence="1">6.2.1.1</ecNumber>
    </recommendedName>
    <alternativeName>
        <fullName evidence="1">Acetate--CoA ligase</fullName>
    </alternativeName>
    <alternativeName>
        <fullName evidence="1">Acyl-activating enzyme</fullName>
    </alternativeName>
</protein>
<dbReference type="EC" id="6.2.1.1" evidence="1"/>
<dbReference type="EMBL" id="CP000912">
    <property type="protein sequence ID" value="ABY40222.1"/>
    <property type="molecule type" value="Genomic_DNA"/>
</dbReference>
<dbReference type="SMR" id="A9WWT6"/>
<dbReference type="KEGG" id="bmt:BSUIS_B1289"/>
<dbReference type="HOGENOM" id="CLU_000022_3_6_5"/>
<dbReference type="Proteomes" id="UP000008545">
    <property type="component" value="Chromosome II"/>
</dbReference>
<dbReference type="GO" id="GO:0005829">
    <property type="term" value="C:cytosol"/>
    <property type="evidence" value="ECO:0007669"/>
    <property type="project" value="TreeGrafter"/>
</dbReference>
<dbReference type="GO" id="GO:0003987">
    <property type="term" value="F:acetate-CoA ligase activity"/>
    <property type="evidence" value="ECO:0007669"/>
    <property type="project" value="UniProtKB-UniRule"/>
</dbReference>
<dbReference type="GO" id="GO:0016208">
    <property type="term" value="F:AMP binding"/>
    <property type="evidence" value="ECO:0007669"/>
    <property type="project" value="InterPro"/>
</dbReference>
<dbReference type="GO" id="GO:0005524">
    <property type="term" value="F:ATP binding"/>
    <property type="evidence" value="ECO:0007669"/>
    <property type="project" value="UniProtKB-KW"/>
</dbReference>
<dbReference type="GO" id="GO:0046872">
    <property type="term" value="F:metal ion binding"/>
    <property type="evidence" value="ECO:0007669"/>
    <property type="project" value="UniProtKB-KW"/>
</dbReference>
<dbReference type="GO" id="GO:0019427">
    <property type="term" value="P:acetyl-CoA biosynthetic process from acetate"/>
    <property type="evidence" value="ECO:0007669"/>
    <property type="project" value="InterPro"/>
</dbReference>
<dbReference type="CDD" id="cd05966">
    <property type="entry name" value="ACS"/>
    <property type="match status" value="1"/>
</dbReference>
<dbReference type="FunFam" id="3.30.300.30:FF:000004">
    <property type="entry name" value="Acetyl-coenzyme A synthetase"/>
    <property type="match status" value="1"/>
</dbReference>
<dbReference type="FunFam" id="3.40.50.12780:FF:000001">
    <property type="entry name" value="Acetyl-coenzyme A synthetase"/>
    <property type="match status" value="1"/>
</dbReference>
<dbReference type="Gene3D" id="3.30.300.30">
    <property type="match status" value="1"/>
</dbReference>
<dbReference type="Gene3D" id="3.40.50.12780">
    <property type="entry name" value="N-terminal domain of ligase-like"/>
    <property type="match status" value="1"/>
</dbReference>
<dbReference type="HAMAP" id="MF_01123">
    <property type="entry name" value="Ac_CoA_synth"/>
    <property type="match status" value="1"/>
</dbReference>
<dbReference type="InterPro" id="IPR011904">
    <property type="entry name" value="Ac_CoA_lig"/>
</dbReference>
<dbReference type="InterPro" id="IPR032387">
    <property type="entry name" value="ACAS_N"/>
</dbReference>
<dbReference type="InterPro" id="IPR025110">
    <property type="entry name" value="AMP-bd_C"/>
</dbReference>
<dbReference type="InterPro" id="IPR045851">
    <property type="entry name" value="AMP-bd_C_sf"/>
</dbReference>
<dbReference type="InterPro" id="IPR020845">
    <property type="entry name" value="AMP-binding_CS"/>
</dbReference>
<dbReference type="InterPro" id="IPR000873">
    <property type="entry name" value="AMP-dep_synth/lig_dom"/>
</dbReference>
<dbReference type="InterPro" id="IPR042099">
    <property type="entry name" value="ANL_N_sf"/>
</dbReference>
<dbReference type="NCBIfam" id="TIGR02188">
    <property type="entry name" value="Ac_CoA_lig_AcsA"/>
    <property type="match status" value="1"/>
</dbReference>
<dbReference type="NCBIfam" id="NF001208">
    <property type="entry name" value="PRK00174.1"/>
    <property type="match status" value="1"/>
</dbReference>
<dbReference type="PANTHER" id="PTHR24095">
    <property type="entry name" value="ACETYL-COENZYME A SYNTHETASE"/>
    <property type="match status" value="1"/>
</dbReference>
<dbReference type="PANTHER" id="PTHR24095:SF14">
    <property type="entry name" value="ACETYL-COENZYME A SYNTHETASE 1"/>
    <property type="match status" value="1"/>
</dbReference>
<dbReference type="Pfam" id="PF16177">
    <property type="entry name" value="ACAS_N"/>
    <property type="match status" value="1"/>
</dbReference>
<dbReference type="Pfam" id="PF00501">
    <property type="entry name" value="AMP-binding"/>
    <property type="match status" value="1"/>
</dbReference>
<dbReference type="Pfam" id="PF13193">
    <property type="entry name" value="AMP-binding_C"/>
    <property type="match status" value="1"/>
</dbReference>
<dbReference type="SUPFAM" id="SSF56801">
    <property type="entry name" value="Acetyl-CoA synthetase-like"/>
    <property type="match status" value="1"/>
</dbReference>
<dbReference type="PROSITE" id="PS00455">
    <property type="entry name" value="AMP_BINDING"/>
    <property type="match status" value="1"/>
</dbReference>
<gene>
    <name evidence="1" type="primary">acsA</name>
    <name type="ordered locus">BSUIS_B1289</name>
</gene>
<keyword id="KW-0007">Acetylation</keyword>
<keyword id="KW-0067">ATP-binding</keyword>
<keyword id="KW-0436">Ligase</keyword>
<keyword id="KW-0460">Magnesium</keyword>
<keyword id="KW-0479">Metal-binding</keyword>
<keyword id="KW-0547">Nucleotide-binding</keyword>
<reference key="1">
    <citation type="submission" date="2007-12" db="EMBL/GenBank/DDBJ databases">
        <title>Brucella suis ATCC 23445 whole genome shotgun sequencing project.</title>
        <authorList>
            <person name="Setubal J.C."/>
            <person name="Bowns C."/>
            <person name="Boyle S."/>
            <person name="Crasta O.R."/>
            <person name="Czar M.J."/>
            <person name="Dharmanolla C."/>
            <person name="Gillespie J.J."/>
            <person name="Kenyon R.W."/>
            <person name="Lu J."/>
            <person name="Mane S."/>
            <person name="Mohapatra S."/>
            <person name="Nagrani S."/>
            <person name="Purkayastha A."/>
            <person name="Rajasimha H.K."/>
            <person name="Shallom J.M."/>
            <person name="Shallom S."/>
            <person name="Shukla M."/>
            <person name="Snyder E.E."/>
            <person name="Sobral B.W."/>
            <person name="Wattam A.R."/>
            <person name="Will R."/>
            <person name="Williams K."/>
            <person name="Yoo H."/>
            <person name="Bruce D."/>
            <person name="Detter C."/>
            <person name="Munk C."/>
            <person name="Brettin T.S."/>
        </authorList>
    </citation>
    <scope>NUCLEOTIDE SEQUENCE [LARGE SCALE GENOMIC DNA]</scope>
    <source>
        <strain>ATCC 23445 / NCTC 10510</strain>
    </source>
</reference>
<organism>
    <name type="scientific">Brucella suis (strain ATCC 23445 / NCTC 10510)</name>
    <dbReference type="NCBI Taxonomy" id="470137"/>
    <lineage>
        <taxon>Bacteria</taxon>
        <taxon>Pseudomonadati</taxon>
        <taxon>Pseudomonadota</taxon>
        <taxon>Alphaproteobacteria</taxon>
        <taxon>Hyphomicrobiales</taxon>
        <taxon>Brucellaceae</taxon>
        <taxon>Brucella/Ochrobactrum group</taxon>
        <taxon>Brucella</taxon>
    </lineage>
</organism>
<sequence length="651" mass="72763">MSEKLYPVLPEAKKNTLIDNETYLEWYEESMSDPDGFWAKHGRRIDWFKPFTKVKNTDFNGDVTIKWYEDGVTNVSYNCIDRHLKSRGDKVAIIWEGDNPYIDKKITYRELYENVCRMANVLKKHGVKKGDRVTIYLPMIPEAAYAMLACARIGAVHSVVFAGFSPEALAGRIVDCESTFVITADEGVRGGKPVALKENTDTAIDIAAKQYVMVNKVLVVRRTGGKVSWGRGRDLWYHQEVASVEPHCEPEPMNAEDPLFILYTSGSTGKPKGVLHTTGGYLVYASMTHQYVFDYHDGEIYWCTADVGWVTGHSYIVYGPLANGATTLMFEGVPNFPDQGRFWEVVDKHHVNIFYTAPTALRALMGAGDEFVTRSSRSTLRLLGSVGEPINPEAWEWYYNVVGDQKCPIVDTWWQTENGGILITPLPGATDLKPGSATRPFFGVKPVLVDNEGNVQEGVADGNLCISDSWPGQMRTVYGDHKRFIETYFSTYKGMYFSGDGCRRDEDGYYWITGRVDDVLNISGHRLGTAEIESALVSHHSVSEAAVVGYPHPIKGQGIYCYVTLMTGADAQDPDELRKELVQHVRKEIGPIATPDKIQFAPGLPKTRSGKIMRRILRKIAEDEFGALGDTSTLADPGVVDDLIENRQNKK</sequence>
<comment type="function">
    <text evidence="1">Catalyzes the conversion of acetate into acetyl-CoA (AcCoA), an essential intermediate at the junction of anabolic and catabolic pathways. AcsA undergoes a two-step reaction. In the first half reaction, AcsA combines acetate with ATP to form acetyl-adenylate (AcAMP) intermediate. In the second half reaction, it can then transfer the acetyl group from AcAMP to the sulfhydryl group of CoA, forming the product AcCoA.</text>
</comment>
<comment type="catalytic activity">
    <reaction evidence="1">
        <text>acetate + ATP + CoA = acetyl-CoA + AMP + diphosphate</text>
        <dbReference type="Rhea" id="RHEA:23176"/>
        <dbReference type="ChEBI" id="CHEBI:30089"/>
        <dbReference type="ChEBI" id="CHEBI:30616"/>
        <dbReference type="ChEBI" id="CHEBI:33019"/>
        <dbReference type="ChEBI" id="CHEBI:57287"/>
        <dbReference type="ChEBI" id="CHEBI:57288"/>
        <dbReference type="ChEBI" id="CHEBI:456215"/>
        <dbReference type="EC" id="6.2.1.1"/>
    </reaction>
</comment>
<comment type="cofactor">
    <cofactor evidence="1">
        <name>Mg(2+)</name>
        <dbReference type="ChEBI" id="CHEBI:18420"/>
    </cofactor>
</comment>
<comment type="PTM">
    <text evidence="1">Acetylated. Deacetylation by the SIR2-homolog deacetylase activates the enzyme.</text>
</comment>
<comment type="similarity">
    <text evidence="1">Belongs to the ATP-dependent AMP-binding enzyme family.</text>
</comment>